<sequence length="562" mass="62162">MDDNKRPLYLPFAGPAILEAPLINKGSAFSEEERIFFNLEGLVPYAIETIEEQASRAYDQFRSFNNDLDKHIYLRNIQDTNETLFYRLVQNHISEMMPIIYTPTVGLACERFSKNYRRNRGLFISYPNKDRIDDILNNSTRQKVKIIVVTDGERILGLGDQGIGGMGIPIGKLSLYTSCGGISPAYTLPITLDVGTDNPQLLEDPMYMGWRHPRIGGEEYAEFIEAFMQAVHVRWPDTLIQFEDFAQKNAMPILERYKERYCCFNDDIQGTAAVTVGSLLAACKAAGTELNKQRVAFLGAGSAGCGIAEAIVAQMVSEGISDEQARSQVCMVDRWGLLLDNMPNLLPFQQKLAQKCADISHWNNFSDNISLLDVVNNAKPTVLIGVSGAPGLFTEEIVRAMHSHCPRPIIFPLSNPTSRVEATPKDILHWTSGQALVATGSPFEPVVVDGETYEIAQCNNSFIFPGIGLGVLASGARHVSDAMLMASSRALAECSPLAINGSGPLLPKLEDIHSVSKHIAFAVGKVAIEQGLSLPASDELLMQSIEDNFWKPEYRRYKRTSF</sequence>
<gene>
    <name evidence="1" type="primary">maeA</name>
    <name type="ordered locus">SO_3855</name>
</gene>
<proteinExistence type="inferred from homology"/>
<keyword id="KW-0479">Metal-binding</keyword>
<keyword id="KW-0520">NAD</keyword>
<keyword id="KW-0560">Oxidoreductase</keyword>
<keyword id="KW-1185">Reference proteome</keyword>
<name>MAO1_SHEON</name>
<evidence type="ECO:0000255" key="1">
    <source>
        <dbReference type="HAMAP-Rule" id="MF_01619"/>
    </source>
</evidence>
<protein>
    <recommendedName>
        <fullName evidence="1">NAD-dependent malic enzyme</fullName>
        <shortName evidence="1">NAD-ME</shortName>
        <ecNumber evidence="1">1.1.1.38</ecNumber>
    </recommendedName>
</protein>
<comment type="catalytic activity">
    <reaction evidence="1">
        <text>(S)-malate + NAD(+) = pyruvate + CO2 + NADH</text>
        <dbReference type="Rhea" id="RHEA:12653"/>
        <dbReference type="ChEBI" id="CHEBI:15361"/>
        <dbReference type="ChEBI" id="CHEBI:15589"/>
        <dbReference type="ChEBI" id="CHEBI:16526"/>
        <dbReference type="ChEBI" id="CHEBI:57540"/>
        <dbReference type="ChEBI" id="CHEBI:57945"/>
        <dbReference type="EC" id="1.1.1.38"/>
    </reaction>
</comment>
<comment type="catalytic activity">
    <reaction evidence="1">
        <text>oxaloacetate + H(+) = pyruvate + CO2</text>
        <dbReference type="Rhea" id="RHEA:15641"/>
        <dbReference type="ChEBI" id="CHEBI:15361"/>
        <dbReference type="ChEBI" id="CHEBI:15378"/>
        <dbReference type="ChEBI" id="CHEBI:16452"/>
        <dbReference type="ChEBI" id="CHEBI:16526"/>
        <dbReference type="EC" id="1.1.1.38"/>
    </reaction>
</comment>
<comment type="cofactor">
    <cofactor evidence="1">
        <name>Mg(2+)</name>
        <dbReference type="ChEBI" id="CHEBI:18420"/>
    </cofactor>
    <cofactor evidence="1">
        <name>Mn(2+)</name>
        <dbReference type="ChEBI" id="CHEBI:29035"/>
    </cofactor>
    <text evidence="1">Divalent metal cations. Prefers magnesium or manganese.</text>
</comment>
<comment type="subunit">
    <text evidence="1">Homotetramer.</text>
</comment>
<comment type="similarity">
    <text evidence="1">Belongs to the malic enzymes family.</text>
</comment>
<organism>
    <name type="scientific">Shewanella oneidensis (strain ATCC 700550 / JCM 31522 / CIP 106686 / LMG 19005 / NCIMB 14063 / MR-1)</name>
    <dbReference type="NCBI Taxonomy" id="211586"/>
    <lineage>
        <taxon>Bacteria</taxon>
        <taxon>Pseudomonadati</taxon>
        <taxon>Pseudomonadota</taxon>
        <taxon>Gammaproteobacteria</taxon>
        <taxon>Alteromonadales</taxon>
        <taxon>Shewanellaceae</taxon>
        <taxon>Shewanella</taxon>
    </lineage>
</organism>
<feature type="chain" id="PRO_0000160232" description="NAD-dependent malic enzyme">
    <location>
        <begin position="1"/>
        <end position="562"/>
    </location>
</feature>
<feature type="active site" description="Proton donor" evidence="1">
    <location>
        <position position="101"/>
    </location>
</feature>
<feature type="active site" description="Proton acceptor" evidence="1">
    <location>
        <position position="172"/>
    </location>
</feature>
<feature type="binding site" evidence="1">
    <location>
        <position position="154"/>
    </location>
    <ligand>
        <name>NAD(+)</name>
        <dbReference type="ChEBI" id="CHEBI:57540"/>
    </ligand>
</feature>
<feature type="binding site" evidence="1">
    <location>
        <position position="243"/>
    </location>
    <ligand>
        <name>a divalent metal cation</name>
        <dbReference type="ChEBI" id="CHEBI:60240"/>
    </ligand>
</feature>
<feature type="binding site" evidence="1">
    <location>
        <position position="244"/>
    </location>
    <ligand>
        <name>a divalent metal cation</name>
        <dbReference type="ChEBI" id="CHEBI:60240"/>
    </ligand>
</feature>
<feature type="binding site" evidence="1">
    <location>
        <position position="267"/>
    </location>
    <ligand>
        <name>a divalent metal cation</name>
        <dbReference type="ChEBI" id="CHEBI:60240"/>
    </ligand>
</feature>
<feature type="binding site" evidence="1">
    <location>
        <position position="267"/>
    </location>
    <ligand>
        <name>NAD(+)</name>
        <dbReference type="ChEBI" id="CHEBI:57540"/>
    </ligand>
</feature>
<feature type="binding site" evidence="1">
    <location>
        <position position="415"/>
    </location>
    <ligand>
        <name>NAD(+)</name>
        <dbReference type="ChEBI" id="CHEBI:57540"/>
    </ligand>
</feature>
<feature type="site" description="Important for activity" evidence="1">
    <location>
        <position position="267"/>
    </location>
</feature>
<dbReference type="EC" id="1.1.1.38" evidence="1"/>
<dbReference type="EMBL" id="AE014299">
    <property type="protein sequence ID" value="AAN56831.1"/>
    <property type="molecule type" value="Genomic_DNA"/>
</dbReference>
<dbReference type="RefSeq" id="NP_719387.1">
    <property type="nucleotide sequence ID" value="NC_004347.2"/>
</dbReference>
<dbReference type="RefSeq" id="WP_011073614.1">
    <property type="nucleotide sequence ID" value="NC_004347.2"/>
</dbReference>
<dbReference type="SMR" id="Q8EAP2"/>
<dbReference type="STRING" id="211586.SO_3855"/>
<dbReference type="PaxDb" id="211586-SO_3855"/>
<dbReference type="KEGG" id="son:SO_3855"/>
<dbReference type="PATRIC" id="fig|211586.12.peg.3742"/>
<dbReference type="eggNOG" id="COG0281">
    <property type="taxonomic scope" value="Bacteria"/>
</dbReference>
<dbReference type="HOGENOM" id="CLU_011405_5_2_6"/>
<dbReference type="OrthoDB" id="3314528at2"/>
<dbReference type="PhylomeDB" id="Q8EAP2"/>
<dbReference type="BioCyc" id="SONE211586:G1GMP-3577-MONOMER"/>
<dbReference type="Proteomes" id="UP000008186">
    <property type="component" value="Chromosome"/>
</dbReference>
<dbReference type="GO" id="GO:0005829">
    <property type="term" value="C:cytosol"/>
    <property type="evidence" value="ECO:0000318"/>
    <property type="project" value="GO_Central"/>
</dbReference>
<dbReference type="GO" id="GO:0004471">
    <property type="term" value="F:malate dehydrogenase (decarboxylating) (NAD+) activity"/>
    <property type="evidence" value="ECO:0007669"/>
    <property type="project" value="UniProtKB-UniRule"/>
</dbReference>
<dbReference type="GO" id="GO:0004470">
    <property type="term" value="F:malic enzyme activity"/>
    <property type="evidence" value="ECO:0000318"/>
    <property type="project" value="GO_Central"/>
</dbReference>
<dbReference type="GO" id="GO:0046872">
    <property type="term" value="F:metal ion binding"/>
    <property type="evidence" value="ECO:0007669"/>
    <property type="project" value="UniProtKB-KW"/>
</dbReference>
<dbReference type="GO" id="GO:0051287">
    <property type="term" value="F:NAD binding"/>
    <property type="evidence" value="ECO:0007669"/>
    <property type="project" value="InterPro"/>
</dbReference>
<dbReference type="GO" id="GO:0008948">
    <property type="term" value="F:oxaloacetate decarboxylase activity"/>
    <property type="evidence" value="ECO:0007669"/>
    <property type="project" value="UniProtKB-UniRule"/>
</dbReference>
<dbReference type="GO" id="GO:0006108">
    <property type="term" value="P:malate metabolic process"/>
    <property type="evidence" value="ECO:0000318"/>
    <property type="project" value="GO_Central"/>
</dbReference>
<dbReference type="GO" id="GO:0006090">
    <property type="term" value="P:pyruvate metabolic process"/>
    <property type="evidence" value="ECO:0000318"/>
    <property type="project" value="GO_Central"/>
</dbReference>
<dbReference type="CDD" id="cd05312">
    <property type="entry name" value="NAD_bind_1_malic_enz"/>
    <property type="match status" value="1"/>
</dbReference>
<dbReference type="FunFam" id="3.40.50.10380:FF:000001">
    <property type="entry name" value="NAD-dependent malic enzyme"/>
    <property type="match status" value="1"/>
</dbReference>
<dbReference type="FunFam" id="3.40.50.720:FF:000055">
    <property type="entry name" value="NAD-dependent malic enzyme"/>
    <property type="match status" value="1"/>
</dbReference>
<dbReference type="Gene3D" id="3.40.50.10380">
    <property type="entry name" value="Malic enzyme, N-terminal domain"/>
    <property type="match status" value="1"/>
</dbReference>
<dbReference type="Gene3D" id="3.40.50.720">
    <property type="entry name" value="NAD(P)-binding Rossmann-like Domain"/>
    <property type="match status" value="1"/>
</dbReference>
<dbReference type="HAMAP" id="MF_01619">
    <property type="entry name" value="NAD_malic_enz"/>
    <property type="match status" value="1"/>
</dbReference>
<dbReference type="InterPro" id="IPR046346">
    <property type="entry name" value="Aminoacid_DH-like_N_sf"/>
</dbReference>
<dbReference type="InterPro" id="IPR015884">
    <property type="entry name" value="Malic_enzyme_CS"/>
</dbReference>
<dbReference type="InterPro" id="IPR012301">
    <property type="entry name" value="Malic_N_dom"/>
</dbReference>
<dbReference type="InterPro" id="IPR037062">
    <property type="entry name" value="Malic_N_dom_sf"/>
</dbReference>
<dbReference type="InterPro" id="IPR012302">
    <property type="entry name" value="Malic_NAD-bd"/>
</dbReference>
<dbReference type="InterPro" id="IPR001891">
    <property type="entry name" value="Malic_OxRdtase"/>
</dbReference>
<dbReference type="InterPro" id="IPR036291">
    <property type="entry name" value="NAD(P)-bd_dom_sf"/>
</dbReference>
<dbReference type="InterPro" id="IPR023667">
    <property type="entry name" value="NAD_malic_enz_proteobac"/>
</dbReference>
<dbReference type="NCBIfam" id="NF010052">
    <property type="entry name" value="PRK13529.1"/>
    <property type="match status" value="1"/>
</dbReference>
<dbReference type="PANTHER" id="PTHR23406">
    <property type="entry name" value="MALIC ENZYME-RELATED"/>
    <property type="match status" value="1"/>
</dbReference>
<dbReference type="PANTHER" id="PTHR23406:SF34">
    <property type="entry name" value="NAD-DEPENDENT MALIC ENZYME, MITOCHONDRIAL"/>
    <property type="match status" value="1"/>
</dbReference>
<dbReference type="Pfam" id="PF00390">
    <property type="entry name" value="malic"/>
    <property type="match status" value="1"/>
</dbReference>
<dbReference type="Pfam" id="PF03949">
    <property type="entry name" value="Malic_M"/>
    <property type="match status" value="1"/>
</dbReference>
<dbReference type="PIRSF" id="PIRSF000106">
    <property type="entry name" value="ME"/>
    <property type="match status" value="1"/>
</dbReference>
<dbReference type="PRINTS" id="PR00072">
    <property type="entry name" value="MALOXRDTASE"/>
</dbReference>
<dbReference type="SMART" id="SM01274">
    <property type="entry name" value="malic"/>
    <property type="match status" value="1"/>
</dbReference>
<dbReference type="SMART" id="SM00919">
    <property type="entry name" value="Malic_M"/>
    <property type="match status" value="1"/>
</dbReference>
<dbReference type="SUPFAM" id="SSF53223">
    <property type="entry name" value="Aminoacid dehydrogenase-like, N-terminal domain"/>
    <property type="match status" value="1"/>
</dbReference>
<dbReference type="SUPFAM" id="SSF51735">
    <property type="entry name" value="NAD(P)-binding Rossmann-fold domains"/>
    <property type="match status" value="1"/>
</dbReference>
<dbReference type="PROSITE" id="PS00331">
    <property type="entry name" value="MALIC_ENZYMES"/>
    <property type="match status" value="1"/>
</dbReference>
<reference key="1">
    <citation type="journal article" date="2002" name="Nat. Biotechnol.">
        <title>Genome sequence of the dissimilatory metal ion-reducing bacterium Shewanella oneidensis.</title>
        <authorList>
            <person name="Heidelberg J.F."/>
            <person name="Paulsen I.T."/>
            <person name="Nelson K.E."/>
            <person name="Gaidos E.J."/>
            <person name="Nelson W.C."/>
            <person name="Read T.D."/>
            <person name="Eisen J.A."/>
            <person name="Seshadri R."/>
            <person name="Ward N.L."/>
            <person name="Methe B.A."/>
            <person name="Clayton R.A."/>
            <person name="Meyer T."/>
            <person name="Tsapin A."/>
            <person name="Scott J."/>
            <person name="Beanan M.J."/>
            <person name="Brinkac L.M."/>
            <person name="Daugherty S.C."/>
            <person name="DeBoy R.T."/>
            <person name="Dodson R.J."/>
            <person name="Durkin A.S."/>
            <person name="Haft D.H."/>
            <person name="Kolonay J.F."/>
            <person name="Madupu R."/>
            <person name="Peterson J.D."/>
            <person name="Umayam L.A."/>
            <person name="White O."/>
            <person name="Wolf A.M."/>
            <person name="Vamathevan J.J."/>
            <person name="Weidman J.F."/>
            <person name="Impraim M."/>
            <person name="Lee K."/>
            <person name="Berry K.J."/>
            <person name="Lee C."/>
            <person name="Mueller J."/>
            <person name="Khouri H.M."/>
            <person name="Gill J."/>
            <person name="Utterback T.R."/>
            <person name="McDonald L.A."/>
            <person name="Feldblyum T.V."/>
            <person name="Smith H.O."/>
            <person name="Venter J.C."/>
            <person name="Nealson K.H."/>
            <person name="Fraser C.M."/>
        </authorList>
    </citation>
    <scope>NUCLEOTIDE SEQUENCE [LARGE SCALE GENOMIC DNA]</scope>
    <source>
        <strain>ATCC 700550 / JCM 31522 / CIP 106686 / LMG 19005 / NCIMB 14063 / MR-1</strain>
    </source>
</reference>
<accession>Q8EAP2</accession>